<organism>
    <name type="scientific">Homo sapiens</name>
    <name type="common">Human</name>
    <dbReference type="NCBI Taxonomy" id="9606"/>
    <lineage>
        <taxon>Eukaryota</taxon>
        <taxon>Metazoa</taxon>
        <taxon>Chordata</taxon>
        <taxon>Craniata</taxon>
        <taxon>Vertebrata</taxon>
        <taxon>Euteleostomi</taxon>
        <taxon>Mammalia</taxon>
        <taxon>Eutheria</taxon>
        <taxon>Euarchontoglires</taxon>
        <taxon>Primates</taxon>
        <taxon>Haplorrhini</taxon>
        <taxon>Catarrhini</taxon>
        <taxon>Hominidae</taxon>
        <taxon>Homo</taxon>
    </lineage>
</organism>
<feature type="chain" id="PRO_0000069597" description="G protein-coupled receptor 88">
    <location>
        <begin position="1"/>
        <end position="384"/>
    </location>
</feature>
<feature type="topological domain" description="Extracellular" evidence="3">
    <location>
        <begin position="1"/>
        <end position="35"/>
    </location>
</feature>
<feature type="transmembrane region" description="Helical; Name=1" evidence="3">
    <location>
        <begin position="36"/>
        <end position="56"/>
    </location>
</feature>
<feature type="topological domain" description="Cytoplasmic" evidence="3">
    <location>
        <begin position="57"/>
        <end position="73"/>
    </location>
</feature>
<feature type="transmembrane region" description="Helical; Name=2" evidence="3">
    <location>
        <begin position="74"/>
        <end position="94"/>
    </location>
</feature>
<feature type="topological domain" description="Extracellular" evidence="3">
    <location>
        <begin position="95"/>
        <end position="116"/>
    </location>
</feature>
<feature type="transmembrane region" description="Helical; Name=3" evidence="3">
    <location>
        <begin position="117"/>
        <end position="136"/>
    </location>
</feature>
<feature type="topological domain" description="Cytoplasmic" evidence="3">
    <location>
        <begin position="137"/>
        <end position="158"/>
    </location>
</feature>
<feature type="transmembrane region" description="Helical; Name=4" evidence="3">
    <location>
        <begin position="159"/>
        <end position="179"/>
    </location>
</feature>
<feature type="topological domain" description="Extracellular" evidence="3">
    <location>
        <begin position="180"/>
        <end position="195"/>
    </location>
</feature>
<feature type="transmembrane region" description="Helical; Name=5" evidence="3">
    <location>
        <begin position="196"/>
        <end position="216"/>
    </location>
</feature>
<feature type="topological domain" description="Cytoplasmic" evidence="3">
    <location>
        <begin position="217"/>
        <end position="285"/>
    </location>
</feature>
<feature type="transmembrane region" description="Helical; Name=6" evidence="3">
    <location>
        <begin position="286"/>
        <end position="306"/>
    </location>
</feature>
<feature type="topological domain" description="Extracellular" evidence="3">
    <location>
        <begin position="307"/>
        <end position="310"/>
    </location>
</feature>
<feature type="transmembrane region" description="Helical; Name=7" evidence="3">
    <location>
        <begin position="311"/>
        <end position="331"/>
    </location>
</feature>
<feature type="topological domain" description="Cytoplasmic" evidence="3">
    <location>
        <begin position="332"/>
        <end position="384"/>
    </location>
</feature>
<feature type="glycosylation site" description="N-linked (GlcNAc...) asparagine" evidence="3">
    <location>
        <position position="3"/>
    </location>
</feature>
<feature type="sequence variant" id="VAR_054767" description="In dbSNP:rs2809819." evidence="5 9">
    <original>V</original>
    <variation>I</variation>
    <location>
        <position position="190"/>
    </location>
</feature>
<feature type="sequence variant" id="VAR_088574" description="In COCPMR; uncertain significance; dbSNP:rs875989788." evidence="7">
    <location>
        <begin position="291"/>
        <end position="384"/>
    </location>
</feature>
<feature type="sequence variant" id="VAR_054768" description="In dbSNP:rs3001995." evidence="5">
    <original>Q</original>
    <variation>H</variation>
    <location>
        <position position="318"/>
    </location>
</feature>
<feature type="mutagenesis site" description="Abolishes the responsiveness to synthetic agonist 2-PCCA." evidence="8">
    <original>W</original>
    <variation>A</variation>
    <variation>I</variation>
    <variation>L</variation>
    <variation>V</variation>
    <location>
        <position position="84"/>
    </location>
</feature>
<feature type="mutagenesis site" description="Reduced G(i)-coupling activity." evidence="8">
    <original>G</original>
    <variation>F</variation>
    <variation>L</variation>
    <variation>W</variation>
    <location>
        <position position="117"/>
    </location>
</feature>
<feature type="mutagenesis site" description="Reduced G(i)-coupling activity." evidence="8">
    <original>G</original>
    <variation>F</variation>
    <variation>L</variation>
    <variation>W</variation>
    <location>
        <position position="121"/>
    </location>
</feature>
<feature type="mutagenesis site" description="Reduced G(i)-coupling activity." evidence="8">
    <original>L</original>
    <variation>A</variation>
    <location>
        <position position="209"/>
    </location>
</feature>
<feature type="mutagenesis site" description="Reduced G(i)-coupling activity." evidence="8">
    <original>V</original>
    <variation>A</variation>
    <variation>F</variation>
    <variation>L</variation>
    <location>
        <position position="216"/>
    </location>
</feature>
<feature type="mutagenesis site" description="Reduced G(i)-coupling activity." evidence="8">
    <original>V</original>
    <variation>A</variation>
    <location>
        <position position="219"/>
    </location>
</feature>
<feature type="mutagenesis site" description="Inhibits D1R-dependent cAMP accumulation." evidence="6">
    <original>G</original>
    <variation>H</variation>
    <location>
        <position position="283"/>
    </location>
</feature>
<feature type="mutagenesis site" description="Retains G(i)-protein-coupled signaling activity. Abolishes the responsiveness to synthetic agonist 2-PCCA." evidence="8">
    <original>G</original>
    <variation>V</variation>
    <location>
        <position position="283"/>
    </location>
</feature>
<feature type="mutagenesis site" description="Reduced G(i)-coupling activity." evidence="8">
    <original>L</original>
    <variation>A</variation>
    <location>
        <position position="287"/>
    </location>
</feature>
<feature type="mutagenesis site" description="Abolishes the responsiveness to synthetic agonist 2-PCCA." evidence="8">
    <original>W</original>
    <variation>A</variation>
    <variation>I</variation>
    <variation>L</variation>
    <variation>V</variation>
    <location>
        <position position="322"/>
    </location>
</feature>
<feature type="helix" evidence="13">
    <location>
        <begin position="38"/>
        <end position="58"/>
    </location>
</feature>
<feature type="helix" evidence="13">
    <location>
        <begin position="60"/>
        <end position="62"/>
    </location>
</feature>
<feature type="helix" evidence="13">
    <location>
        <begin position="66"/>
        <end position="84"/>
    </location>
</feature>
<feature type="helix" evidence="13">
    <location>
        <begin position="114"/>
        <end position="143"/>
    </location>
</feature>
<feature type="helix" evidence="13">
    <location>
        <begin position="146"/>
        <end position="152"/>
    </location>
</feature>
<feature type="helix" evidence="13">
    <location>
        <begin position="155"/>
        <end position="174"/>
    </location>
</feature>
<feature type="helix" evidence="13">
    <location>
        <begin position="192"/>
        <end position="227"/>
    </location>
</feature>
<feature type="helix" evidence="13">
    <location>
        <begin position="284"/>
        <end position="308"/>
    </location>
</feature>
<feature type="helix" evidence="13">
    <location>
        <begin position="315"/>
        <end position="337"/>
    </location>
</feature>
<feature type="helix" evidence="13">
    <location>
        <begin position="341"/>
        <end position="350"/>
    </location>
</feature>
<evidence type="ECO:0000250" key="1">
    <source>
        <dbReference type="UniProtKB" id="Q9EPB7"/>
    </source>
</evidence>
<evidence type="ECO:0000250" key="2">
    <source>
        <dbReference type="UniProtKB" id="Q9ESP4"/>
    </source>
</evidence>
<evidence type="ECO:0000255" key="3"/>
<evidence type="ECO:0000255" key="4">
    <source>
        <dbReference type="PROSITE-ProRule" id="PRU00521"/>
    </source>
</evidence>
<evidence type="ECO:0000269" key="5">
    <source>
    </source>
</evidence>
<evidence type="ECO:0000269" key="6">
    <source>
    </source>
</evidence>
<evidence type="ECO:0000269" key="7">
    <source>
    </source>
</evidence>
<evidence type="ECO:0000269" key="8">
    <source>
    </source>
</evidence>
<evidence type="ECO:0000269" key="9">
    <source ref="2"/>
</evidence>
<evidence type="ECO:0000305" key="10"/>
<evidence type="ECO:0007744" key="11">
    <source>
        <dbReference type="PDB" id="7EJX"/>
    </source>
</evidence>
<evidence type="ECO:0007744" key="12">
    <source>
        <dbReference type="PDB" id="7WZ4"/>
    </source>
</evidence>
<evidence type="ECO:0007829" key="13">
    <source>
        <dbReference type="PDB" id="7EJX"/>
    </source>
</evidence>
<accession>Q9GZN0</accession>
<accession>Q29S24</accession>
<accession>Q6VN48</accession>
<proteinExistence type="evidence at protein level"/>
<name>GPR88_HUMAN</name>
<comment type="function">
    <text evidence="1 2 6 8">Orphan G protein-coupled receptor implicated in a large repertoire of behavioral responses that engage motor activities, spatial learning, and emotional processing (By similarity). May play a role in the regulation of cognitive and motor function (By similarity). Couples with the heterotrimeric G protein complex of the G(i) subfamily, consisting of GNAI1, GNB1 and GNG2, thereby acting through a G(i)-mediated pathway (PubMed:35501348). Plays a role in the attenuation of D1 dopamine receptor (D1R)-mediated cAMP response in ciliated cells (PubMed:23936473). In non-ciliated cells, involved in the inhibition of the beta-2 adrenergic receptor (B2AR) response (PubMed:23936473).</text>
</comment>
<comment type="subcellular location">
    <subcellularLocation>
        <location evidence="2">Cell membrane</location>
        <topology evidence="3">Multi-pass membrane protein</topology>
    </subcellularLocation>
    <subcellularLocation>
        <location evidence="6">Cell projection</location>
        <location evidence="6">Cilium membrane</location>
        <topology evidence="3">Multi-pass membrane protein</topology>
    </subcellularLocation>
    <subcellularLocation>
        <location evidence="2">Cytoplasm</location>
    </subcellularLocation>
    <subcellularLocation>
        <location evidence="2">Nucleus</location>
    </subcellularLocation>
    <text evidence="2 6">Localized to cilia in ciliated cells; whereas in non-ciliated cells, distributed throughout the cell membrane (PubMed:23936473). During cortical lamination, subcellular location shifts, on the day of birth, from expression at the plasma membrane and in the cytoplasm to the nuclei of neurons. This intranuclear localization remains throughout adulthood.</text>
</comment>
<comment type="tissue specificity">
    <text evidence="5">Expressed predominantly in the striatum.</text>
</comment>
<comment type="disease" evidence="7">
    <disease id="DI-04724">
        <name>Chorea, childhood-onset, with psychomotor retardation</name>
        <acronym>COCPMR</acronym>
        <description>An autosomal recessive neurodevelopmental disorder characterized by abnormal involuntary movements, marked speech delay, intellectual disability and learning difficulties.</description>
        <dbReference type="MIM" id="616939"/>
    </disease>
    <text>The disease is caused by variants affecting the gene represented in this entry.</text>
</comment>
<comment type="similarity">
    <text evidence="4">Belongs to the G-protein coupled receptor 1 family.</text>
</comment>
<sequence>MTNSSSTSTSSTTGGSLLLLCEEEESWAGRRIPVSLLYSGLAIGGTLANGMVIYLVSSFRKLQTTSNAFIVNGCAADLSVCALWMPQEAVLGLLPTGSAEPPADWDGAGGSYRLLRGGLLGLGLTVSLLSHCLVALNRYLLITRAPATYQALYQRRHTAGMLALSWALALGLVLLLPPWAPRPGAAPPRVHYPALLAAAALLAQTALLLHCYLGIVRRVRVSVKRVSVLNFHLLHQLPGCAAAAAAFPGAQHAPGPGGAAHPAQAQPLPPALHPRRAQRRLSGLSVLLLCCVFLLATQPLVWVSLASGFSLPVPWGVQAASWLLCCALSALNPLLYTWRNEEFRRSVRSVLPGVGDAAAAAVAATAVPAVSQAQLGTRAAGQHW</sequence>
<keyword id="KW-0002">3D-structure</keyword>
<keyword id="KW-1003">Cell membrane</keyword>
<keyword id="KW-0966">Cell projection</keyword>
<keyword id="KW-0963">Cytoplasm</keyword>
<keyword id="KW-0297">G-protein coupled receptor</keyword>
<keyword id="KW-0325">Glycoprotein</keyword>
<keyword id="KW-0991">Intellectual disability</keyword>
<keyword id="KW-0472">Membrane</keyword>
<keyword id="KW-0539">Nucleus</keyword>
<keyword id="KW-1267">Proteomics identification</keyword>
<keyword id="KW-0675">Receptor</keyword>
<keyword id="KW-1185">Reference proteome</keyword>
<keyword id="KW-0807">Transducer</keyword>
<keyword id="KW-0812">Transmembrane</keyword>
<keyword id="KW-1133">Transmembrane helix</keyword>
<gene>
    <name type="primary">GPR88</name>
    <name type="synonym">STRG</name>
</gene>
<reference key="1">
    <citation type="journal article" date="2000" name="Genomics">
        <title>A novel G-protein-coupled receptor gene expressed in striatum.</title>
        <authorList>
            <person name="Mizushima K."/>
            <person name="Miyamoto Y."/>
            <person name="Tsukahara F."/>
            <person name="Hirai M."/>
            <person name="Sakaki Y."/>
            <person name="Ito T."/>
        </authorList>
    </citation>
    <scope>NUCLEOTIDE SEQUENCE [GENOMIC DNA / MRNA]</scope>
    <scope>TISSUE SPECIFICITY</scope>
    <scope>VARIANTS ILE-190 AND HIS-318</scope>
</reference>
<reference key="2">
    <citation type="submission" date="2003-07" db="EMBL/GenBank/DDBJ databases">
        <title>cDNA clones of human proteins involved in signal transduction sequenced by the Guthrie cDNA resource center (www.cdna.org).</title>
        <authorList>
            <person name="Kopatz S.A."/>
            <person name="Aronstam R.S."/>
            <person name="Sharma S.V."/>
        </authorList>
    </citation>
    <scope>NUCLEOTIDE SEQUENCE [LARGE SCALE MRNA]</scope>
    <scope>VARIANT ILE-190</scope>
</reference>
<reference key="3">
    <citation type="journal article" date="2006" name="Nature">
        <title>The DNA sequence and biological annotation of human chromosome 1.</title>
        <authorList>
            <person name="Gregory S.G."/>
            <person name="Barlow K.F."/>
            <person name="McLay K.E."/>
            <person name="Kaul R."/>
            <person name="Swarbreck D."/>
            <person name="Dunham A."/>
            <person name="Scott C.E."/>
            <person name="Howe K.L."/>
            <person name="Woodfine K."/>
            <person name="Spencer C.C.A."/>
            <person name="Jones M.C."/>
            <person name="Gillson C."/>
            <person name="Searle S."/>
            <person name="Zhou Y."/>
            <person name="Kokocinski F."/>
            <person name="McDonald L."/>
            <person name="Evans R."/>
            <person name="Phillips K."/>
            <person name="Atkinson A."/>
            <person name="Cooper R."/>
            <person name="Jones C."/>
            <person name="Hall R.E."/>
            <person name="Andrews T.D."/>
            <person name="Lloyd C."/>
            <person name="Ainscough R."/>
            <person name="Almeida J.P."/>
            <person name="Ambrose K.D."/>
            <person name="Anderson F."/>
            <person name="Andrew R.W."/>
            <person name="Ashwell R.I.S."/>
            <person name="Aubin K."/>
            <person name="Babbage A.K."/>
            <person name="Bagguley C.L."/>
            <person name="Bailey J."/>
            <person name="Beasley H."/>
            <person name="Bethel G."/>
            <person name="Bird C.P."/>
            <person name="Bray-Allen S."/>
            <person name="Brown J.Y."/>
            <person name="Brown A.J."/>
            <person name="Buckley D."/>
            <person name="Burton J."/>
            <person name="Bye J."/>
            <person name="Carder C."/>
            <person name="Chapman J.C."/>
            <person name="Clark S.Y."/>
            <person name="Clarke G."/>
            <person name="Clee C."/>
            <person name="Cobley V."/>
            <person name="Collier R.E."/>
            <person name="Corby N."/>
            <person name="Coville G.J."/>
            <person name="Davies J."/>
            <person name="Deadman R."/>
            <person name="Dunn M."/>
            <person name="Earthrowl M."/>
            <person name="Ellington A.G."/>
            <person name="Errington H."/>
            <person name="Frankish A."/>
            <person name="Frankland J."/>
            <person name="French L."/>
            <person name="Garner P."/>
            <person name="Garnett J."/>
            <person name="Gay L."/>
            <person name="Ghori M.R.J."/>
            <person name="Gibson R."/>
            <person name="Gilby L.M."/>
            <person name="Gillett W."/>
            <person name="Glithero R.J."/>
            <person name="Grafham D.V."/>
            <person name="Griffiths C."/>
            <person name="Griffiths-Jones S."/>
            <person name="Grocock R."/>
            <person name="Hammond S."/>
            <person name="Harrison E.S.I."/>
            <person name="Hart E."/>
            <person name="Haugen E."/>
            <person name="Heath P.D."/>
            <person name="Holmes S."/>
            <person name="Holt K."/>
            <person name="Howden P.J."/>
            <person name="Hunt A.R."/>
            <person name="Hunt S.E."/>
            <person name="Hunter G."/>
            <person name="Isherwood J."/>
            <person name="James R."/>
            <person name="Johnson C."/>
            <person name="Johnson D."/>
            <person name="Joy A."/>
            <person name="Kay M."/>
            <person name="Kershaw J.K."/>
            <person name="Kibukawa M."/>
            <person name="Kimberley A.M."/>
            <person name="King A."/>
            <person name="Knights A.J."/>
            <person name="Lad H."/>
            <person name="Laird G."/>
            <person name="Lawlor S."/>
            <person name="Leongamornlert D.A."/>
            <person name="Lloyd D.M."/>
            <person name="Loveland J."/>
            <person name="Lovell J."/>
            <person name="Lush M.J."/>
            <person name="Lyne R."/>
            <person name="Martin S."/>
            <person name="Mashreghi-Mohammadi M."/>
            <person name="Matthews L."/>
            <person name="Matthews N.S.W."/>
            <person name="McLaren S."/>
            <person name="Milne S."/>
            <person name="Mistry S."/>
            <person name="Moore M.J.F."/>
            <person name="Nickerson T."/>
            <person name="O'Dell C.N."/>
            <person name="Oliver K."/>
            <person name="Palmeiri A."/>
            <person name="Palmer S.A."/>
            <person name="Parker A."/>
            <person name="Patel D."/>
            <person name="Pearce A.V."/>
            <person name="Peck A.I."/>
            <person name="Pelan S."/>
            <person name="Phelps K."/>
            <person name="Phillimore B.J."/>
            <person name="Plumb R."/>
            <person name="Rajan J."/>
            <person name="Raymond C."/>
            <person name="Rouse G."/>
            <person name="Saenphimmachak C."/>
            <person name="Sehra H.K."/>
            <person name="Sheridan E."/>
            <person name="Shownkeen R."/>
            <person name="Sims S."/>
            <person name="Skuce C.D."/>
            <person name="Smith M."/>
            <person name="Steward C."/>
            <person name="Subramanian S."/>
            <person name="Sycamore N."/>
            <person name="Tracey A."/>
            <person name="Tromans A."/>
            <person name="Van Helmond Z."/>
            <person name="Wall M."/>
            <person name="Wallis J.M."/>
            <person name="White S."/>
            <person name="Whitehead S.L."/>
            <person name="Wilkinson J.E."/>
            <person name="Willey D.L."/>
            <person name="Williams H."/>
            <person name="Wilming L."/>
            <person name="Wray P.W."/>
            <person name="Wu Z."/>
            <person name="Coulson A."/>
            <person name="Vaudin M."/>
            <person name="Sulston J.E."/>
            <person name="Durbin R.M."/>
            <person name="Hubbard T."/>
            <person name="Wooster R."/>
            <person name="Dunham I."/>
            <person name="Carter N.P."/>
            <person name="McVean G."/>
            <person name="Ross M.T."/>
            <person name="Harrow J."/>
            <person name="Olson M.V."/>
            <person name="Beck S."/>
            <person name="Rogers J."/>
            <person name="Bentley D.R."/>
        </authorList>
    </citation>
    <scope>NUCLEOTIDE SEQUENCE [LARGE SCALE GENOMIC DNA]</scope>
</reference>
<reference key="4">
    <citation type="journal article" date="2004" name="Genome Res.">
        <title>The status, quality, and expansion of the NIH full-length cDNA project: the Mammalian Gene Collection (MGC).</title>
        <authorList>
            <consortium name="The MGC Project Team"/>
        </authorList>
    </citation>
    <scope>NUCLEOTIDE SEQUENCE [LARGE SCALE MRNA] OF 1-357</scope>
    <source>
        <tissue>Brain</tissue>
    </source>
</reference>
<reference key="5">
    <citation type="journal article" date="2013" name="PLoS ONE">
        <title>GPR88 reveals a discrete function of primary cilia as selective insulators of GPCR cross-talk.</title>
        <authorList>
            <person name="Marley A."/>
            <person name="Choy R.W."/>
            <person name="von Zastrow M."/>
        </authorList>
    </citation>
    <scope>FUNCTION</scope>
    <scope>SUBCELLULAR LOCATION</scope>
    <scope>MUTAGENESIS OF GLY-283</scope>
</reference>
<reference evidence="11 12" key="6">
    <citation type="journal article" date="2022" name="Nat. Commun.">
        <title>Activation and allosteric regulation of the orphan GPR88-Gi1 signaling complex.</title>
        <authorList>
            <person name="Chen G."/>
            <person name="Xu J."/>
            <person name="Inoue A."/>
            <person name="Schmidt M.F."/>
            <person name="Bai C."/>
            <person name="Lu Q."/>
            <person name="Gmeiner P."/>
            <person name="Liu Z."/>
            <person name="Du Y."/>
        </authorList>
    </citation>
    <scope>STRUCTURE BY ELECTRON MICROSCOPY (2.40 ANGSTROMS) IN COMPLEX WITH GNAI1; GNB1; GNG2; GI-STABILIZING ANTIBODY SCFV16 AND SYNTHETIC AGONIST 2-PCCA</scope>
    <scope>FUNCTION</scope>
    <scope>MUTAGENESIS OF TRP-84; GLY-117; GLY-121; LEU-209; VAL-216; VAL-219; GLY-283; LEU-287 AND TRP-322</scope>
</reference>
<reference key="7">
    <citation type="journal article" date="2016" name="Neurol. Genet.">
        <title>Deleterious mutation in GPR88 is associated with chorea, speech delay, and learning disabilities.</title>
        <authorList>
            <person name="Alkufri F."/>
            <person name="Shaag A."/>
            <person name="Abu-Libdeh B."/>
            <person name="Elpeleg O."/>
        </authorList>
    </citation>
    <scope>INVOLVEMENT IN COCPMR</scope>
    <scope>VARIANT COCPMR 291-CYS--TRP-384 DEL</scope>
</reference>
<dbReference type="EMBL" id="AB042410">
    <property type="protein sequence ID" value="BAB18247.1"/>
    <property type="molecule type" value="mRNA"/>
</dbReference>
<dbReference type="EMBL" id="AB042411">
    <property type="protein sequence ID" value="BAB18248.1"/>
    <property type="molecule type" value="Genomic_DNA"/>
</dbReference>
<dbReference type="EMBL" id="AY336999">
    <property type="protein sequence ID" value="AAQ76787.1"/>
    <property type="molecule type" value="Genomic_DNA"/>
</dbReference>
<dbReference type="EMBL" id="AC099670">
    <property type="status" value="NOT_ANNOTATED_CDS"/>
    <property type="molecule type" value="Genomic_DNA"/>
</dbReference>
<dbReference type="EMBL" id="BC036775">
    <property type="protein sequence ID" value="AAH36775.1"/>
    <property type="molecule type" value="mRNA"/>
</dbReference>
<dbReference type="CCDS" id="CCDS772.1"/>
<dbReference type="RefSeq" id="NP_071332.2">
    <property type="nucleotide sequence ID" value="NM_022049.3"/>
</dbReference>
<dbReference type="PDB" id="7EJX">
    <property type="method" value="EM"/>
    <property type="resolution" value="2.40 A"/>
    <property type="chains" value="R=1-384"/>
</dbReference>
<dbReference type="PDB" id="7WZ4">
    <property type="method" value="EM"/>
    <property type="resolution" value="3.00 A"/>
    <property type="chains" value="R=1-384"/>
</dbReference>
<dbReference type="PDBsum" id="7EJX"/>
<dbReference type="PDBsum" id="7WZ4"/>
<dbReference type="EMDB" id="EMD-31164"/>
<dbReference type="EMDB" id="EMD-32904"/>
<dbReference type="SMR" id="Q9GZN0"/>
<dbReference type="BioGRID" id="119908">
    <property type="interactions" value="15"/>
</dbReference>
<dbReference type="ComplexPortal" id="CPX-8432">
    <property type="entry name" value="GPR88-Gi1 signaling complex"/>
</dbReference>
<dbReference type="FunCoup" id="Q9GZN0">
    <property type="interactions" value="310"/>
</dbReference>
<dbReference type="IntAct" id="Q9GZN0">
    <property type="interactions" value="16"/>
</dbReference>
<dbReference type="STRING" id="9606.ENSP00000314223"/>
<dbReference type="BindingDB" id="Q9GZN0"/>
<dbReference type="ChEMBL" id="CHEMBL3399910"/>
<dbReference type="GuidetoPHARMACOLOGY" id="123"/>
<dbReference type="GlyCosmos" id="Q9GZN0">
    <property type="glycosylation" value="1 site, No reported glycans"/>
</dbReference>
<dbReference type="GlyGen" id="Q9GZN0">
    <property type="glycosylation" value="1 site"/>
</dbReference>
<dbReference type="iPTMnet" id="Q9GZN0"/>
<dbReference type="PhosphoSitePlus" id="Q9GZN0"/>
<dbReference type="BioMuta" id="GPR88"/>
<dbReference type="DMDM" id="229464740"/>
<dbReference type="MassIVE" id="Q9GZN0"/>
<dbReference type="PaxDb" id="9606-ENSP00000314223"/>
<dbReference type="PeptideAtlas" id="Q9GZN0"/>
<dbReference type="Antibodypedia" id="19999">
    <property type="antibodies" value="196 antibodies from 25 providers"/>
</dbReference>
<dbReference type="DNASU" id="54112"/>
<dbReference type="Ensembl" id="ENST00000315033.5">
    <property type="protein sequence ID" value="ENSP00000314223.4"/>
    <property type="gene ID" value="ENSG00000181656.7"/>
</dbReference>
<dbReference type="GeneID" id="54112"/>
<dbReference type="KEGG" id="hsa:54112"/>
<dbReference type="MANE-Select" id="ENST00000315033.5">
    <property type="protein sequence ID" value="ENSP00000314223.4"/>
    <property type="RefSeq nucleotide sequence ID" value="NM_022049.3"/>
    <property type="RefSeq protein sequence ID" value="NP_071332.2"/>
</dbReference>
<dbReference type="UCSC" id="uc001dth.4">
    <property type="organism name" value="human"/>
</dbReference>
<dbReference type="AGR" id="HGNC:4539"/>
<dbReference type="CTD" id="54112"/>
<dbReference type="DisGeNET" id="54112"/>
<dbReference type="GeneCards" id="GPR88"/>
<dbReference type="HGNC" id="HGNC:4539">
    <property type="gene designation" value="GPR88"/>
</dbReference>
<dbReference type="HPA" id="ENSG00000181656">
    <property type="expression patterns" value="Tissue enriched (brain)"/>
</dbReference>
<dbReference type="MalaCards" id="GPR88"/>
<dbReference type="MIM" id="607468">
    <property type="type" value="gene"/>
</dbReference>
<dbReference type="MIM" id="616939">
    <property type="type" value="phenotype"/>
</dbReference>
<dbReference type="neXtProt" id="NX_Q9GZN0"/>
<dbReference type="OpenTargets" id="ENSG00000181656"/>
<dbReference type="PharmGKB" id="PA28932"/>
<dbReference type="VEuPathDB" id="HostDB:ENSG00000181656"/>
<dbReference type="eggNOG" id="KOG3656">
    <property type="taxonomic scope" value="Eukaryota"/>
</dbReference>
<dbReference type="GeneTree" id="ENSGT00390000009609"/>
<dbReference type="HOGENOM" id="CLU_053532_0_0_1"/>
<dbReference type="InParanoid" id="Q9GZN0"/>
<dbReference type="OMA" id="LLYTWKN"/>
<dbReference type="OrthoDB" id="10039923at2759"/>
<dbReference type="PAN-GO" id="Q9GZN0">
    <property type="GO annotations" value="5 GO annotations based on evolutionary models"/>
</dbReference>
<dbReference type="PhylomeDB" id="Q9GZN0"/>
<dbReference type="TreeFam" id="TF336499"/>
<dbReference type="PathwayCommons" id="Q9GZN0"/>
<dbReference type="BioGRID-ORCS" id="54112">
    <property type="hits" value="8 hits in 1134 CRISPR screens"/>
</dbReference>
<dbReference type="GeneWiki" id="GPR88"/>
<dbReference type="GenomeRNAi" id="54112"/>
<dbReference type="Pharos" id="Q9GZN0">
    <property type="development level" value="Tchem"/>
</dbReference>
<dbReference type="PRO" id="PR:Q9GZN0"/>
<dbReference type="Proteomes" id="UP000005640">
    <property type="component" value="Chromosome 1"/>
</dbReference>
<dbReference type="RNAct" id="Q9GZN0">
    <property type="molecule type" value="protein"/>
</dbReference>
<dbReference type="Bgee" id="ENSG00000181656">
    <property type="expression patterns" value="Expressed in lateral globus pallidus and 98 other cell types or tissues"/>
</dbReference>
<dbReference type="GO" id="GO:0060170">
    <property type="term" value="C:ciliary membrane"/>
    <property type="evidence" value="ECO:0000314"/>
    <property type="project" value="UniProtKB"/>
</dbReference>
<dbReference type="GO" id="GO:0005929">
    <property type="term" value="C:cilium"/>
    <property type="evidence" value="ECO:0000314"/>
    <property type="project" value="MGI"/>
</dbReference>
<dbReference type="GO" id="GO:0005737">
    <property type="term" value="C:cytoplasm"/>
    <property type="evidence" value="ECO:0000250"/>
    <property type="project" value="UniProtKB"/>
</dbReference>
<dbReference type="GO" id="GO:0005634">
    <property type="term" value="C:nucleus"/>
    <property type="evidence" value="ECO:0000250"/>
    <property type="project" value="UniProtKB"/>
</dbReference>
<dbReference type="GO" id="GO:0005886">
    <property type="term" value="C:plasma membrane"/>
    <property type="evidence" value="ECO:0000250"/>
    <property type="project" value="UniProtKB"/>
</dbReference>
<dbReference type="GO" id="GO:0004941">
    <property type="term" value="F:beta2-adrenergic receptor activity"/>
    <property type="evidence" value="ECO:0000314"/>
    <property type="project" value="UniProtKB"/>
</dbReference>
<dbReference type="GO" id="GO:0003774">
    <property type="term" value="F:cytoskeletal motor activity"/>
    <property type="evidence" value="ECO:0000250"/>
    <property type="project" value="UniProtKB"/>
</dbReference>
<dbReference type="GO" id="GO:0008020">
    <property type="term" value="F:G protein-coupled photoreceptor activity"/>
    <property type="evidence" value="ECO:0000318"/>
    <property type="project" value="GO_Central"/>
</dbReference>
<dbReference type="GO" id="GO:0007188">
    <property type="term" value="P:adenylate cyclase-modulating G protein-coupled receptor signaling pathway"/>
    <property type="evidence" value="ECO:0000314"/>
    <property type="project" value="UniProtKB"/>
</dbReference>
<dbReference type="GO" id="GO:0071482">
    <property type="term" value="P:cellular response to light stimulus"/>
    <property type="evidence" value="ECO:0000318"/>
    <property type="project" value="GO_Central"/>
</dbReference>
<dbReference type="GO" id="GO:0007186">
    <property type="term" value="P:G protein-coupled receptor signaling pathway"/>
    <property type="evidence" value="ECO:0000314"/>
    <property type="project" value="UniProtKB"/>
</dbReference>
<dbReference type="GO" id="GO:0007626">
    <property type="term" value="P:locomotory behavior"/>
    <property type="evidence" value="ECO:0007669"/>
    <property type="project" value="Ensembl"/>
</dbReference>
<dbReference type="GO" id="GO:0061743">
    <property type="term" value="P:motor learning"/>
    <property type="evidence" value="ECO:0000250"/>
    <property type="project" value="UniProtKB"/>
</dbReference>
<dbReference type="GO" id="GO:0050885">
    <property type="term" value="P:neuromuscular process controlling balance"/>
    <property type="evidence" value="ECO:0007669"/>
    <property type="project" value="Ensembl"/>
</dbReference>
<dbReference type="GO" id="GO:0019228">
    <property type="term" value="P:neuronal action potential"/>
    <property type="evidence" value="ECO:0007669"/>
    <property type="project" value="Ensembl"/>
</dbReference>
<dbReference type="GO" id="GO:0007602">
    <property type="term" value="P:phototransduction"/>
    <property type="evidence" value="ECO:0000318"/>
    <property type="project" value="GO_Central"/>
</dbReference>
<dbReference type="CDD" id="cd15211">
    <property type="entry name" value="7tmA_GPR88-like"/>
    <property type="match status" value="1"/>
</dbReference>
<dbReference type="Gene3D" id="1.20.1070.10">
    <property type="entry name" value="Rhodopsin 7-helix transmembrane proteins"/>
    <property type="match status" value="1"/>
</dbReference>
<dbReference type="InterPro" id="IPR050125">
    <property type="entry name" value="GPCR_opsins"/>
</dbReference>
<dbReference type="InterPro" id="IPR000276">
    <property type="entry name" value="GPCR_Rhodpsn"/>
</dbReference>
<dbReference type="InterPro" id="IPR017452">
    <property type="entry name" value="GPCR_Rhodpsn_7TM"/>
</dbReference>
<dbReference type="PANTHER" id="PTHR24240">
    <property type="entry name" value="OPSIN"/>
    <property type="match status" value="1"/>
</dbReference>
<dbReference type="Pfam" id="PF00001">
    <property type="entry name" value="7tm_1"/>
    <property type="match status" value="1"/>
</dbReference>
<dbReference type="PRINTS" id="PR00237">
    <property type="entry name" value="GPCRRHODOPSN"/>
</dbReference>
<dbReference type="SUPFAM" id="SSF81321">
    <property type="entry name" value="Family A G protein-coupled receptor-like"/>
    <property type="match status" value="1"/>
</dbReference>
<dbReference type="PROSITE" id="PS50262">
    <property type="entry name" value="G_PROTEIN_RECEP_F1_2"/>
    <property type="match status" value="1"/>
</dbReference>
<protein>
    <recommendedName>
        <fullName evidence="10">G protein-coupled receptor 88</fullName>
    </recommendedName>
    <alternativeName>
        <fullName>Striatum-specific G-protein coupled receptor</fullName>
    </alternativeName>
</protein>